<name>FA53B_DANRE</name>
<sequence>MCVAMVIIHTKTLEKKAVDDVTSEASLQPQEPLTMSQGTALFSCGIMDSGRWADVGSVCGVQQRPVGSSLESLWDSMREAGATGGISGLLRDLSLSEASPASAAPPSKRQCRSLSCSDELGCRSSWRPQGSRVWTTVEKRRCHSGGSVQRGVFNPSGFPAMQRSSSFSLPAHSSHLEPFTHGFPFQAFSECPQTPQTLYRSHEQICPAEASSPESTPELQRRSGQSGLARSRSQPCVHNHQKIGVKRRRPADSHKQRPSLDLLKMTQKLQDFHSLSCPGFSGDDKTLPSSSPALLNDTCERAQNDSSADAPIHQSESSSEDALIHQSDSSSADALIHQSESSRPAGKERECLWAGLCSRRGRDLFQLGGELDIEQIERN</sequence>
<organism>
    <name type="scientific">Danio rerio</name>
    <name type="common">Zebrafish</name>
    <name type="synonym">Brachydanio rerio</name>
    <dbReference type="NCBI Taxonomy" id="7955"/>
    <lineage>
        <taxon>Eukaryota</taxon>
        <taxon>Metazoa</taxon>
        <taxon>Chordata</taxon>
        <taxon>Craniata</taxon>
        <taxon>Vertebrata</taxon>
        <taxon>Euteleostomi</taxon>
        <taxon>Actinopterygii</taxon>
        <taxon>Neopterygii</taxon>
        <taxon>Teleostei</taxon>
        <taxon>Ostariophysi</taxon>
        <taxon>Cypriniformes</taxon>
        <taxon>Danionidae</taxon>
        <taxon>Danioninae</taxon>
        <taxon>Danio</taxon>
    </lineage>
</organism>
<protein>
    <recommendedName>
        <fullName evidence="6">Protein FAM53B</fullName>
    </recommendedName>
    <alternativeName>
        <fullName evidence="5">Protein simplet</fullName>
    </alternativeName>
</protein>
<dbReference type="EMBL" id="AL953868">
    <property type="status" value="NOT_ANNOTATED_CDS"/>
    <property type="molecule type" value="Genomic_DNA"/>
</dbReference>
<dbReference type="EMBL" id="BC048029">
    <property type="protein sequence ID" value="AAH48029.1"/>
    <property type="molecule type" value="mRNA"/>
</dbReference>
<dbReference type="EMBL" id="BC066405">
    <property type="protein sequence ID" value="AAH66405.1"/>
    <property type="molecule type" value="mRNA"/>
</dbReference>
<dbReference type="RefSeq" id="NP_001007188.1">
    <property type="nucleotide sequence ID" value="NM_001007187.1"/>
</dbReference>
<dbReference type="FunCoup" id="F1QN48">
    <property type="interactions" value="1953"/>
</dbReference>
<dbReference type="STRING" id="7955.ENSDARP00000020465"/>
<dbReference type="PaxDb" id="7955-ENSDARP00000020465"/>
<dbReference type="Ensembl" id="ENSDART00000008312">
    <molecule id="F1QN48-1"/>
    <property type="protein sequence ID" value="ENSDARP00000020465"/>
    <property type="gene ID" value="ENSDARG00000016156"/>
</dbReference>
<dbReference type="GeneID" id="406586"/>
<dbReference type="KEGG" id="dre:406586"/>
<dbReference type="AGR" id="ZFIN:ZDB-GENE-040426-2495"/>
<dbReference type="CTD" id="9679"/>
<dbReference type="ZFIN" id="ZDB-GENE-040426-2495">
    <property type="gene designation" value="fam53b"/>
</dbReference>
<dbReference type="eggNOG" id="ENOG502QQM7">
    <property type="taxonomic scope" value="Eukaryota"/>
</dbReference>
<dbReference type="HOGENOM" id="CLU_054215_2_1_1"/>
<dbReference type="InParanoid" id="F1QN48"/>
<dbReference type="OMA" id="QPCVHNH"/>
<dbReference type="OrthoDB" id="9934966at2759"/>
<dbReference type="TreeFam" id="TF332095"/>
<dbReference type="PRO" id="PR:F1QN48"/>
<dbReference type="Proteomes" id="UP000000437">
    <property type="component" value="Chromosome 12"/>
</dbReference>
<dbReference type="Bgee" id="ENSDARG00000016156">
    <property type="expression patterns" value="Expressed in spleen and 34 other cell types or tissues"/>
</dbReference>
<dbReference type="ExpressionAtlas" id="F1QN48">
    <property type="expression patterns" value="baseline"/>
</dbReference>
<dbReference type="GO" id="GO:0005634">
    <property type="term" value="C:nucleus"/>
    <property type="evidence" value="ECO:0000314"/>
    <property type="project" value="UniProtKB"/>
</dbReference>
<dbReference type="GO" id="GO:0048675">
    <property type="term" value="P:axon extension"/>
    <property type="evidence" value="ECO:0000315"/>
    <property type="project" value="ZFIN"/>
</dbReference>
<dbReference type="GO" id="GO:0031101">
    <property type="term" value="P:fin regeneration"/>
    <property type="evidence" value="ECO:0000315"/>
    <property type="project" value="ZFIN"/>
</dbReference>
<dbReference type="GO" id="GO:0090263">
    <property type="term" value="P:positive regulation of canonical Wnt signaling pathway"/>
    <property type="evidence" value="ECO:0000315"/>
    <property type="project" value="ZFIN"/>
</dbReference>
<dbReference type="GO" id="GO:0006606">
    <property type="term" value="P:protein import into nucleus"/>
    <property type="evidence" value="ECO:0000315"/>
    <property type="project" value="ZFIN"/>
</dbReference>
<dbReference type="GO" id="GO:0016055">
    <property type="term" value="P:Wnt signaling pathway"/>
    <property type="evidence" value="ECO:0007669"/>
    <property type="project" value="UniProtKB-KW"/>
</dbReference>
<dbReference type="InterPro" id="IPR029356">
    <property type="entry name" value="FAM53"/>
</dbReference>
<dbReference type="PANTHER" id="PTHR28567">
    <property type="entry name" value="PROTEIN FAM53A-LIKE ISOFORM X1"/>
    <property type="match status" value="1"/>
</dbReference>
<dbReference type="PANTHER" id="PTHR28567:SF1">
    <property type="entry name" value="PROTEIN FAM53B"/>
    <property type="match status" value="1"/>
</dbReference>
<dbReference type="Pfam" id="PF15242">
    <property type="entry name" value="FAM53"/>
    <property type="match status" value="2"/>
</dbReference>
<feature type="chain" id="PRO_0000440957" description="Protein FAM53B">
    <location>
        <begin position="1"/>
        <end position="379"/>
    </location>
</feature>
<feature type="region of interest" description="Disordered" evidence="2">
    <location>
        <begin position="206"/>
        <end position="257"/>
    </location>
</feature>
<feature type="region of interest" description="Disordered" evidence="2">
    <location>
        <begin position="302"/>
        <end position="348"/>
    </location>
</feature>
<feature type="short sequence motif" description="Nuclear localization signal" evidence="4">
    <location>
        <begin position="246"/>
        <end position="249"/>
    </location>
</feature>
<feature type="compositionally biased region" description="Polar residues" evidence="2">
    <location>
        <begin position="212"/>
        <end position="236"/>
    </location>
</feature>
<feature type="compositionally biased region" description="Basic residues" evidence="2">
    <location>
        <begin position="239"/>
        <end position="249"/>
    </location>
</feature>
<feature type="compositionally biased region" description="Polar residues" evidence="2">
    <location>
        <begin position="326"/>
        <end position="342"/>
    </location>
</feature>
<feature type="splice variant" id="VSP_059013" description="In isoform 2.">
    <location>
        <begin position="1"/>
        <end position="76"/>
    </location>
</feature>
<feature type="mutagenesis site" description="Abolishes nuclear localization and beta-catenin (ctnnb1) import into the nucleus." evidence="4">
    <original>KRRR</original>
    <variation>EGGG</variation>
    <location>
        <begin position="246"/>
        <end position="249"/>
    </location>
</feature>
<feature type="sequence conflict" description="In Ref. 2; AAH66405/AAH48029." evidence="6" ref="2">
    <original>T</original>
    <variation>A</variation>
    <location>
        <position position="136"/>
    </location>
</feature>
<feature type="sequence conflict" description="In Ref. 2; AAH66405/AAH48029." evidence="6" ref="2">
    <original>S</original>
    <variation>T</variation>
    <location>
        <position position="226"/>
    </location>
</feature>
<comment type="function">
    <text evidence="3 4">Acts as a regulator of Wnt signaling pathway by regulating beta-catenin (ctnnb1) nuclear localization (PubMed:25183871). Required for appendage regeneration by regulating cell proliferation (PubMed:19014929).</text>
</comment>
<comment type="subunit">
    <text evidence="1">Interacts with ctnnb1.</text>
</comment>
<comment type="subcellular location">
    <subcellularLocation>
        <location evidence="4">Nucleus</location>
    </subcellularLocation>
</comment>
<comment type="alternative products">
    <event type="alternative splicing"/>
    <isoform>
        <id>F1QN48-1</id>
        <name>1</name>
        <sequence type="displayed"/>
    </isoform>
    <isoform>
        <id>F1QN48-2</id>
        <name>2</name>
        <sequence type="described" ref="VSP_059013"/>
    </isoform>
</comment>
<comment type="tissue specificity">
    <text evidence="3">Mainly expressed in proliferating tissues (PubMed:19014929).</text>
</comment>
<comment type="induction">
    <text evidence="3">Following amputation, expressed in regenerating tissues (PubMed:19014929).</text>
</comment>
<comment type="disruption phenotype">
    <text evidence="3 4">Loss of posterior structures and beta-catenin (ctnnb1)-dependent gene transcription due to the absence of accumulation of beta-catenin (ctnnb1) in the nucleus (PubMed:25183871). Fishes show reduced regenerative outgrowth following amputation due to decreased cell proliferation (PubMed:19014929).</text>
</comment>
<comment type="similarity">
    <text evidence="6">Belongs to the FAM53 family.</text>
</comment>
<keyword id="KW-0025">Alternative splicing</keyword>
<keyword id="KW-0539">Nucleus</keyword>
<keyword id="KW-1185">Reference proteome</keyword>
<keyword id="KW-0879">Wnt signaling pathway</keyword>
<accession>F1QN48</accession>
<accession>Q6NYZ5</accession>
<accession>Q7ZUQ7</accession>
<gene>
    <name evidence="7" type="primary">fam53b</name>
    <name evidence="5" type="synonym">smp</name>
</gene>
<reference key="1">
    <citation type="journal article" date="2013" name="Nature">
        <title>The zebrafish reference genome sequence and its relationship to the human genome.</title>
        <authorList>
            <person name="Howe K."/>
            <person name="Clark M.D."/>
            <person name="Torroja C.F."/>
            <person name="Torrance J."/>
            <person name="Berthelot C."/>
            <person name="Muffato M."/>
            <person name="Collins J.E."/>
            <person name="Humphray S."/>
            <person name="McLaren K."/>
            <person name="Matthews L."/>
            <person name="McLaren S."/>
            <person name="Sealy I."/>
            <person name="Caccamo M."/>
            <person name="Churcher C."/>
            <person name="Scott C."/>
            <person name="Barrett J.C."/>
            <person name="Koch R."/>
            <person name="Rauch G.J."/>
            <person name="White S."/>
            <person name="Chow W."/>
            <person name="Kilian B."/>
            <person name="Quintais L.T."/>
            <person name="Guerra-Assuncao J.A."/>
            <person name="Zhou Y."/>
            <person name="Gu Y."/>
            <person name="Yen J."/>
            <person name="Vogel J.H."/>
            <person name="Eyre T."/>
            <person name="Redmond S."/>
            <person name="Banerjee R."/>
            <person name="Chi J."/>
            <person name="Fu B."/>
            <person name="Langley E."/>
            <person name="Maguire S.F."/>
            <person name="Laird G.K."/>
            <person name="Lloyd D."/>
            <person name="Kenyon E."/>
            <person name="Donaldson S."/>
            <person name="Sehra H."/>
            <person name="Almeida-King J."/>
            <person name="Loveland J."/>
            <person name="Trevanion S."/>
            <person name="Jones M."/>
            <person name="Quail M."/>
            <person name="Willey D."/>
            <person name="Hunt A."/>
            <person name="Burton J."/>
            <person name="Sims S."/>
            <person name="McLay K."/>
            <person name="Plumb B."/>
            <person name="Davis J."/>
            <person name="Clee C."/>
            <person name="Oliver K."/>
            <person name="Clark R."/>
            <person name="Riddle C."/>
            <person name="Elliot D."/>
            <person name="Threadgold G."/>
            <person name="Harden G."/>
            <person name="Ware D."/>
            <person name="Begum S."/>
            <person name="Mortimore B."/>
            <person name="Kerry G."/>
            <person name="Heath P."/>
            <person name="Phillimore B."/>
            <person name="Tracey A."/>
            <person name="Corby N."/>
            <person name="Dunn M."/>
            <person name="Johnson C."/>
            <person name="Wood J."/>
            <person name="Clark S."/>
            <person name="Pelan S."/>
            <person name="Griffiths G."/>
            <person name="Smith M."/>
            <person name="Glithero R."/>
            <person name="Howden P."/>
            <person name="Barker N."/>
            <person name="Lloyd C."/>
            <person name="Stevens C."/>
            <person name="Harley J."/>
            <person name="Holt K."/>
            <person name="Panagiotidis G."/>
            <person name="Lovell J."/>
            <person name="Beasley H."/>
            <person name="Henderson C."/>
            <person name="Gordon D."/>
            <person name="Auger K."/>
            <person name="Wright D."/>
            <person name="Collins J."/>
            <person name="Raisen C."/>
            <person name="Dyer L."/>
            <person name="Leung K."/>
            <person name="Robertson L."/>
            <person name="Ambridge K."/>
            <person name="Leongamornlert D."/>
            <person name="McGuire S."/>
            <person name="Gilderthorp R."/>
            <person name="Griffiths C."/>
            <person name="Manthravadi D."/>
            <person name="Nichol S."/>
            <person name="Barker G."/>
            <person name="Whitehead S."/>
            <person name="Kay M."/>
            <person name="Brown J."/>
            <person name="Murnane C."/>
            <person name="Gray E."/>
            <person name="Humphries M."/>
            <person name="Sycamore N."/>
            <person name="Barker D."/>
            <person name="Saunders D."/>
            <person name="Wallis J."/>
            <person name="Babbage A."/>
            <person name="Hammond S."/>
            <person name="Mashreghi-Mohammadi M."/>
            <person name="Barr L."/>
            <person name="Martin S."/>
            <person name="Wray P."/>
            <person name="Ellington A."/>
            <person name="Matthews N."/>
            <person name="Ellwood M."/>
            <person name="Woodmansey R."/>
            <person name="Clark G."/>
            <person name="Cooper J."/>
            <person name="Tromans A."/>
            <person name="Grafham D."/>
            <person name="Skuce C."/>
            <person name="Pandian R."/>
            <person name="Andrews R."/>
            <person name="Harrison E."/>
            <person name="Kimberley A."/>
            <person name="Garnett J."/>
            <person name="Fosker N."/>
            <person name="Hall R."/>
            <person name="Garner P."/>
            <person name="Kelly D."/>
            <person name="Bird C."/>
            <person name="Palmer S."/>
            <person name="Gehring I."/>
            <person name="Berger A."/>
            <person name="Dooley C.M."/>
            <person name="Ersan-Urun Z."/>
            <person name="Eser C."/>
            <person name="Geiger H."/>
            <person name="Geisler M."/>
            <person name="Karotki L."/>
            <person name="Kirn A."/>
            <person name="Konantz J."/>
            <person name="Konantz M."/>
            <person name="Oberlander M."/>
            <person name="Rudolph-Geiger S."/>
            <person name="Teucke M."/>
            <person name="Lanz C."/>
            <person name="Raddatz G."/>
            <person name="Osoegawa K."/>
            <person name="Zhu B."/>
            <person name="Rapp A."/>
            <person name="Widaa S."/>
            <person name="Langford C."/>
            <person name="Yang F."/>
            <person name="Schuster S.C."/>
            <person name="Carter N.P."/>
            <person name="Harrow J."/>
            <person name="Ning Z."/>
            <person name="Herrero J."/>
            <person name="Searle S.M."/>
            <person name="Enright A."/>
            <person name="Geisler R."/>
            <person name="Plasterk R.H."/>
            <person name="Lee C."/>
            <person name="Westerfield M."/>
            <person name="de Jong P.J."/>
            <person name="Zon L.I."/>
            <person name="Postlethwait J.H."/>
            <person name="Nusslein-Volhard C."/>
            <person name="Hubbard T.J."/>
            <person name="Roest Crollius H."/>
            <person name="Rogers J."/>
            <person name="Stemple D.L."/>
        </authorList>
    </citation>
    <scope>NUCLEOTIDE SEQUENCE [LARGE SCALE GENOMIC DNA]</scope>
    <source>
        <strain>Tuebingen</strain>
    </source>
</reference>
<reference key="2">
    <citation type="submission" date="2004-02" db="EMBL/GenBank/DDBJ databases">
        <authorList>
            <consortium name="NIH - Zebrafish Gene Collection (ZGC) project"/>
        </authorList>
    </citation>
    <scope>NUCLEOTIDE SEQUENCE [LARGE SCALE MRNA] (ISOFORMS 1 AND 2)</scope>
    <source>
        <tissue>Kidney</tissue>
    </source>
</reference>
<reference key="3">
    <citation type="journal article" date="2009" name="Dev. Biol.">
        <title>Simplet controls cell proliferation and gene transcription during zebrafish caudal fin regeneration.</title>
        <authorList>
            <person name="Kizil C."/>
            <person name="Otto G.W."/>
            <person name="Geisler R."/>
            <person name="Nuesslein-Volhard C."/>
            <person name="Antos C.L."/>
        </authorList>
    </citation>
    <scope>FUNCTION</scope>
    <scope>DISRUPTION PHENOTYPE</scope>
    <scope>TISSUE SPECIFICITY</scope>
    <scope>INDUCTION</scope>
</reference>
<reference key="4">
    <citation type="journal article" date="2014" name="Development">
        <title>Simplet/Fam53b is required for Wnt signal transduction by regulating beta-catenin nuclear localization.</title>
        <authorList>
            <person name="Kizil C."/>
            <person name="Kuechler B."/>
            <person name="Yan J.J."/>
            <person name="Oezhan G."/>
            <person name="Moro E."/>
            <person name="Argenton F."/>
            <person name="Brand M."/>
            <person name="Weidinger G."/>
            <person name="Antos C.L."/>
        </authorList>
    </citation>
    <scope>FUNCTION</scope>
    <scope>SUBCELLULAR LOCATION</scope>
    <scope>DISRUPTION PHENOTYPE</scope>
    <scope>MUTAGENESIS OF 246-LYS--ARG-249</scope>
</reference>
<proteinExistence type="evidence at protein level"/>
<evidence type="ECO:0000250" key="1">
    <source>
        <dbReference type="UniProtKB" id="Q14153"/>
    </source>
</evidence>
<evidence type="ECO:0000256" key="2">
    <source>
        <dbReference type="SAM" id="MobiDB-lite"/>
    </source>
</evidence>
<evidence type="ECO:0000269" key="3">
    <source>
    </source>
</evidence>
<evidence type="ECO:0000269" key="4">
    <source>
    </source>
</evidence>
<evidence type="ECO:0000303" key="5">
    <source>
    </source>
</evidence>
<evidence type="ECO:0000305" key="6"/>
<evidence type="ECO:0000312" key="7">
    <source>
        <dbReference type="ZFIN" id="ZDB-GENE-040426-2495"/>
    </source>
</evidence>